<comment type="function">
    <text evidence="1">SUMO E3 ligase that acts as a regulator of crossing-over during meiosis: required to couple chromosome synapsis to the formation of crossover-specific recombination complexes. Localizes to recombination sites and stabilizes meiosis-specific recombination factors, such as MutS-gamma complex proteins (MSH4 and MSH5) and TEX11. May mediate sumoylation of target proteins MSH4 and/or MSH5, leading to enhance their binding to recombination sites. Acts as a limiting factor for crossover designation and/or reinforcement and plays an antagonist role with CCNB1IP1/HEI10 in the regulation of meiotic recombination (By similarity).</text>
</comment>
<comment type="pathway">
    <text>Protein modification; protein sumoylation.</text>
</comment>
<comment type="subcellular location">
    <subcellularLocation>
        <location evidence="1">Nucleus</location>
    </subcellularLocation>
    <subcellularLocation>
        <location evidence="1">Chromosome</location>
    </subcellularLocation>
    <text evidence="1">Associates to the synaptonemal complex. Localizes to a minority of double-strand breaks (DSBs) sites. Marks crossover sites during midpachynema (By similarity).</text>
</comment>
<comment type="alternative products">
    <event type="alternative splicing"/>
    <isoform>
        <id>Q495C1-1</id>
        <name>1</name>
        <sequence type="displayed"/>
    </isoform>
    <isoform>
        <id>Q495C1-2</id>
        <name>2</name>
        <sequence type="described" ref="VSP_022840 VSP_022841"/>
    </isoform>
    <isoform>
        <id>Q495C1-3</id>
        <name>3</name>
        <sequence type="described" ref="VSP_022843"/>
    </isoform>
    <isoform>
        <id>Q495C1-4</id>
        <name>4</name>
        <sequence type="described" ref="VSP_022839"/>
    </isoform>
    <isoform>
        <id>Q495C1-5</id>
        <name>5</name>
        <sequence type="described" ref="VSP_022842 VSP_022844"/>
    </isoform>
    <isoform>
        <id>Q495C1-6</id>
        <name>6</name>
        <sequence type="described" ref="VSP_046301"/>
    </isoform>
</comment>
<comment type="polymorphism">
    <text evidence="4">Genetic variations in RNF212 influence recombination rate, designated recombination rate quantitative trait locus 1 (RRQTL1) [MIM:612042].</text>
</comment>
<comment type="disease" evidence="5">
    <disease id="DI-06207">
        <name>Spermatogenic failure 62</name>
        <acronym>SPGF62</acronym>
        <description>An autosomal recessive male infertility disorder characterized by non-obstructive azoospermia, due to complete metaphase arrest at the spermatocyte stage.</description>
        <dbReference type="MIM" id="619673"/>
    </disease>
    <text>The disease is caused by variants affecting the gene represented in this entry.</text>
</comment>
<proteinExistence type="evidence at transcript level"/>
<name>RN212_HUMAN</name>
<sequence length="297" mass="33365">MANWVFCNRCFQPPHRTSCFSLTNCGHVYCDACLGKGKKNECLICKAPCRTVLLSKHTDADIQAFFMSIDSLCKKYSRETSQILEFQEKHRKRLLAFYREKISRLEESLRKSVLQIEQLQSMRSSQQTAFSTIKSSVSTKPHGCLLPPHSSAPDRLESMEVDLSPSPIRKSEIAAGPARISMISPPQDGRMGPHLTASFCFIPWLTLSKPPVPGECVISRGSPCFCIDVCPHWLLLLAFSSGRHGELTNSKTLPIYAEVQRAVLFPFQQAEGTLDTFRTPAVSVVFPLCQFERKKSF</sequence>
<keyword id="KW-0025">Alternative splicing</keyword>
<keyword id="KW-0158">Chromosome</keyword>
<keyword id="KW-0175">Coiled coil</keyword>
<keyword id="KW-0469">Meiosis</keyword>
<keyword id="KW-0479">Metal-binding</keyword>
<keyword id="KW-0539">Nucleus</keyword>
<keyword id="KW-1185">Reference proteome</keyword>
<keyword id="KW-0808">Transferase</keyword>
<keyword id="KW-0833">Ubl conjugation pathway</keyword>
<keyword id="KW-0862">Zinc</keyword>
<keyword id="KW-0863">Zinc-finger</keyword>
<accession>Q495C1</accession>
<accession>C9J8N0</accession>
<accession>Q495C0</accession>
<accession>Q86W82</accession>
<accession>Q8IY99</accession>
<accession>Q8N8U7</accession>
<dbReference type="EC" id="2.3.2.-"/>
<dbReference type="EMBL" id="AK096160">
    <property type="protein sequence ID" value="BAC04714.1"/>
    <property type="molecule type" value="mRNA"/>
</dbReference>
<dbReference type="EMBL" id="AC019103">
    <property type="status" value="NOT_ANNOTATED_CDS"/>
    <property type="molecule type" value="Genomic_DNA"/>
</dbReference>
<dbReference type="EMBL" id="AC092535">
    <property type="status" value="NOT_ANNOTATED_CDS"/>
    <property type="molecule type" value="Genomic_DNA"/>
</dbReference>
<dbReference type="EMBL" id="BC036250">
    <property type="protein sequence ID" value="AAH36250.2"/>
    <property type="molecule type" value="mRNA"/>
</dbReference>
<dbReference type="EMBL" id="BC050356">
    <property type="protein sequence ID" value="AAH50356.2"/>
    <property type="molecule type" value="mRNA"/>
</dbReference>
<dbReference type="EMBL" id="BC101258">
    <property type="protein sequence ID" value="AAI01259.1"/>
    <property type="molecule type" value="mRNA"/>
</dbReference>
<dbReference type="EMBL" id="BC101259">
    <property type="protein sequence ID" value="AAI01260.1"/>
    <property type="molecule type" value="mRNA"/>
</dbReference>
<dbReference type="EMBL" id="BC101260">
    <property type="protein sequence ID" value="AAI01261.1"/>
    <property type="molecule type" value="mRNA"/>
</dbReference>
<dbReference type="EMBL" id="BC101261">
    <property type="protein sequence ID" value="AAI01262.1"/>
    <property type="molecule type" value="mRNA"/>
</dbReference>
<dbReference type="CCDS" id="CCDS3345.1">
    <molecule id="Q495C1-5"/>
</dbReference>
<dbReference type="CCDS" id="CCDS46996.1">
    <molecule id="Q495C1-1"/>
</dbReference>
<dbReference type="CCDS" id="CCDS54704.1">
    <molecule id="Q495C1-6"/>
</dbReference>
<dbReference type="RefSeq" id="NP_001124506.1">
    <molecule id="Q495C1-1"/>
    <property type="nucleotide sequence ID" value="NM_001131034.4"/>
</dbReference>
<dbReference type="RefSeq" id="NP_001180247.1">
    <molecule id="Q495C1-6"/>
    <property type="nucleotide sequence ID" value="NM_001193318.3"/>
</dbReference>
<dbReference type="RefSeq" id="NP_919420.1">
    <molecule id="Q495C1-5"/>
    <property type="nucleotide sequence ID" value="NM_194439.5"/>
</dbReference>
<dbReference type="RefSeq" id="XP_047306040.1">
    <molecule id="Q495C1-5"/>
    <property type="nucleotide sequence ID" value="XM_047450084.1"/>
</dbReference>
<dbReference type="RefSeq" id="XP_054205694.1">
    <molecule id="Q495C1-5"/>
    <property type="nucleotide sequence ID" value="XM_054349719.1"/>
</dbReference>
<dbReference type="SMR" id="Q495C1"/>
<dbReference type="BioGRID" id="130126">
    <property type="interactions" value="25"/>
</dbReference>
<dbReference type="FunCoup" id="Q495C1">
    <property type="interactions" value="33"/>
</dbReference>
<dbReference type="IntAct" id="Q495C1">
    <property type="interactions" value="4"/>
</dbReference>
<dbReference type="STRING" id="9606.ENSP00000389709"/>
<dbReference type="iPTMnet" id="Q495C1"/>
<dbReference type="PhosphoSitePlus" id="Q495C1"/>
<dbReference type="BioMuta" id="RNF212"/>
<dbReference type="DMDM" id="121943260"/>
<dbReference type="jPOST" id="Q495C1"/>
<dbReference type="MassIVE" id="Q495C1"/>
<dbReference type="PaxDb" id="9606-ENSP00000389709"/>
<dbReference type="PeptideAtlas" id="Q495C1"/>
<dbReference type="ProteomicsDB" id="61954">
    <molecule id="Q495C1-1"/>
</dbReference>
<dbReference type="ProteomicsDB" id="61956">
    <molecule id="Q495C1-3"/>
</dbReference>
<dbReference type="ProteomicsDB" id="61958">
    <molecule id="Q495C1-5"/>
</dbReference>
<dbReference type="Antibodypedia" id="22203">
    <property type="antibodies" value="121 antibodies from 25 providers"/>
</dbReference>
<dbReference type="DNASU" id="285498"/>
<dbReference type="Ensembl" id="ENST00000333673.5">
    <molecule id="Q495C1-6"/>
    <property type="protein sequence ID" value="ENSP00000327481.5"/>
    <property type="gene ID" value="ENSG00000178222.14"/>
</dbReference>
<dbReference type="Ensembl" id="ENST00000382968.9">
    <molecule id="Q495C1-5"/>
    <property type="protein sequence ID" value="ENSP00000372428.5"/>
    <property type="gene ID" value="ENSG00000178222.14"/>
</dbReference>
<dbReference type="Ensembl" id="ENST00000433731.7">
    <molecule id="Q495C1-1"/>
    <property type="protein sequence ID" value="ENSP00000389709.2"/>
    <property type="gene ID" value="ENSG00000178222.14"/>
</dbReference>
<dbReference type="Ensembl" id="ENST00000511620.5">
    <molecule id="Q495C1-2"/>
    <property type="protein sequence ID" value="ENSP00000426115.1"/>
    <property type="gene ID" value="ENSG00000178222.14"/>
</dbReference>
<dbReference type="GeneID" id="285498"/>
<dbReference type="KEGG" id="hsa:285498"/>
<dbReference type="MANE-Select" id="ENST00000433731.7">
    <property type="protein sequence ID" value="ENSP00000389709.2"/>
    <property type="RefSeq nucleotide sequence ID" value="NM_001131034.4"/>
    <property type="RefSeq protein sequence ID" value="NP_001124506.1"/>
</dbReference>
<dbReference type="UCSC" id="uc003gci.4">
    <molecule id="Q495C1-1"/>
    <property type="organism name" value="human"/>
</dbReference>
<dbReference type="AGR" id="HGNC:27729"/>
<dbReference type="CTD" id="285498"/>
<dbReference type="DisGeNET" id="285498"/>
<dbReference type="GeneCards" id="RNF212"/>
<dbReference type="HGNC" id="HGNC:27729">
    <property type="gene designation" value="RNF212"/>
</dbReference>
<dbReference type="HPA" id="ENSG00000178222">
    <property type="expression patterns" value="Tissue enhanced (pancreas)"/>
</dbReference>
<dbReference type="MalaCards" id="RNF212"/>
<dbReference type="MIM" id="612041">
    <property type="type" value="gene"/>
</dbReference>
<dbReference type="MIM" id="612042">
    <property type="type" value="phenotype"/>
</dbReference>
<dbReference type="MIM" id="619673">
    <property type="type" value="phenotype"/>
</dbReference>
<dbReference type="neXtProt" id="NX_Q495C1"/>
<dbReference type="OpenTargets" id="ENSG00000178222"/>
<dbReference type="Orphanet" id="399805">
    <property type="disease" value="Male infertility with azoospermia or oligozoospermia due to single gene mutation"/>
</dbReference>
<dbReference type="PharmGKB" id="PA162401656"/>
<dbReference type="VEuPathDB" id="HostDB:ENSG00000178222"/>
<dbReference type="eggNOG" id="KOG4739">
    <property type="taxonomic scope" value="Eukaryota"/>
</dbReference>
<dbReference type="GeneTree" id="ENSGT00740000115581"/>
<dbReference type="HOGENOM" id="CLU_074594_1_0_1"/>
<dbReference type="InParanoid" id="Q495C1"/>
<dbReference type="OMA" id="VCCNSCF"/>
<dbReference type="OrthoDB" id="2535391at2759"/>
<dbReference type="PAN-GO" id="Q495C1">
    <property type="GO annotations" value="4 GO annotations based on evolutionary models"/>
</dbReference>
<dbReference type="PhylomeDB" id="Q495C1"/>
<dbReference type="TreeFam" id="TF339477"/>
<dbReference type="PathwayCommons" id="Q495C1"/>
<dbReference type="SignaLink" id="Q495C1"/>
<dbReference type="SIGNOR" id="Q495C1"/>
<dbReference type="UniPathway" id="UPA00886"/>
<dbReference type="BioGRID-ORCS" id="285498">
    <property type="hits" value="14 hits in 1189 CRISPR screens"/>
</dbReference>
<dbReference type="ChiTaRS" id="RNF212">
    <property type="organism name" value="human"/>
</dbReference>
<dbReference type="GenomeRNAi" id="285498"/>
<dbReference type="Pharos" id="Q495C1">
    <property type="development level" value="Tbio"/>
</dbReference>
<dbReference type="PRO" id="PR:Q495C1"/>
<dbReference type="Proteomes" id="UP000005640">
    <property type="component" value="Chromosome 4"/>
</dbReference>
<dbReference type="RNAct" id="Q495C1">
    <property type="molecule type" value="protein"/>
</dbReference>
<dbReference type="Bgee" id="ENSG00000178222">
    <property type="expression patterns" value="Expressed in body of pancreas and 103 other cell types or tissues"/>
</dbReference>
<dbReference type="ExpressionAtlas" id="Q495C1">
    <property type="expression patterns" value="baseline and differential"/>
</dbReference>
<dbReference type="GO" id="GO:0000795">
    <property type="term" value="C:synaptonemal complex"/>
    <property type="evidence" value="ECO:0000318"/>
    <property type="project" value="GO_Central"/>
</dbReference>
<dbReference type="GO" id="GO:0019789">
    <property type="term" value="F:SUMO transferase activity"/>
    <property type="evidence" value="ECO:0000318"/>
    <property type="project" value="GO_Central"/>
</dbReference>
<dbReference type="GO" id="GO:0008270">
    <property type="term" value="F:zinc ion binding"/>
    <property type="evidence" value="ECO:0007669"/>
    <property type="project" value="UniProtKB-KW"/>
</dbReference>
<dbReference type="GO" id="GO:0051026">
    <property type="term" value="P:chiasma assembly"/>
    <property type="evidence" value="ECO:0000250"/>
    <property type="project" value="UniProtKB"/>
</dbReference>
<dbReference type="GO" id="GO:0007129">
    <property type="term" value="P:homologous chromosome pairing at meiosis"/>
    <property type="evidence" value="ECO:0000318"/>
    <property type="project" value="GO_Central"/>
</dbReference>
<dbReference type="GO" id="GO:0006311">
    <property type="term" value="P:meiotic gene conversion"/>
    <property type="evidence" value="ECO:0000250"/>
    <property type="project" value="UniProtKB"/>
</dbReference>
<dbReference type="GO" id="GO:0016925">
    <property type="term" value="P:protein sumoylation"/>
    <property type="evidence" value="ECO:0007669"/>
    <property type="project" value="UniProtKB-UniPathway"/>
</dbReference>
<dbReference type="GO" id="GO:0007131">
    <property type="term" value="P:reciprocal meiotic recombination"/>
    <property type="evidence" value="ECO:0000250"/>
    <property type="project" value="UniProtKB"/>
</dbReference>
<dbReference type="CDD" id="cd16746">
    <property type="entry name" value="RING-HC_RNF212"/>
    <property type="match status" value="1"/>
</dbReference>
<dbReference type="FunFam" id="3.30.40.10:FF:000839">
    <property type="entry name" value="Ring finger protein 212"/>
    <property type="match status" value="1"/>
</dbReference>
<dbReference type="InterPro" id="IPR042123">
    <property type="entry name" value="Zip3/RNF212-like"/>
</dbReference>
<dbReference type="InterPro" id="IPR001841">
    <property type="entry name" value="Znf_RING"/>
</dbReference>
<dbReference type="InterPro" id="IPR017907">
    <property type="entry name" value="Znf_RING_CS"/>
</dbReference>
<dbReference type="PANTHER" id="PTHR22663:SF21">
    <property type="entry name" value="E3 SUMO-PROTEIN LIGASE RNF212-RELATED"/>
    <property type="match status" value="1"/>
</dbReference>
<dbReference type="PANTHER" id="PTHR22663">
    <property type="entry name" value="RING FINGER PROTEIN NARYA-RELATED"/>
    <property type="match status" value="1"/>
</dbReference>
<dbReference type="Pfam" id="PF14634">
    <property type="entry name" value="zf-RING_5"/>
    <property type="match status" value="1"/>
</dbReference>
<dbReference type="PROSITE" id="PS00518">
    <property type="entry name" value="ZF_RING_1"/>
    <property type="match status" value="1"/>
</dbReference>
<dbReference type="PROSITE" id="PS50089">
    <property type="entry name" value="ZF_RING_2"/>
    <property type="match status" value="1"/>
</dbReference>
<gene>
    <name type="primary">RNF212</name>
</gene>
<reference key="1">
    <citation type="journal article" date="2004" name="Nat. Genet.">
        <title>Complete sequencing and characterization of 21,243 full-length human cDNAs.</title>
        <authorList>
            <person name="Ota T."/>
            <person name="Suzuki Y."/>
            <person name="Nishikawa T."/>
            <person name="Otsuki T."/>
            <person name="Sugiyama T."/>
            <person name="Irie R."/>
            <person name="Wakamatsu A."/>
            <person name="Hayashi K."/>
            <person name="Sato H."/>
            <person name="Nagai K."/>
            <person name="Kimura K."/>
            <person name="Makita H."/>
            <person name="Sekine M."/>
            <person name="Obayashi M."/>
            <person name="Nishi T."/>
            <person name="Shibahara T."/>
            <person name="Tanaka T."/>
            <person name="Ishii S."/>
            <person name="Yamamoto J."/>
            <person name="Saito K."/>
            <person name="Kawai Y."/>
            <person name="Isono Y."/>
            <person name="Nakamura Y."/>
            <person name="Nagahari K."/>
            <person name="Murakami K."/>
            <person name="Yasuda T."/>
            <person name="Iwayanagi T."/>
            <person name="Wagatsuma M."/>
            <person name="Shiratori A."/>
            <person name="Sudo H."/>
            <person name="Hosoiri T."/>
            <person name="Kaku Y."/>
            <person name="Kodaira H."/>
            <person name="Kondo H."/>
            <person name="Sugawara M."/>
            <person name="Takahashi M."/>
            <person name="Kanda K."/>
            <person name="Yokoi T."/>
            <person name="Furuya T."/>
            <person name="Kikkawa E."/>
            <person name="Omura Y."/>
            <person name="Abe K."/>
            <person name="Kamihara K."/>
            <person name="Katsuta N."/>
            <person name="Sato K."/>
            <person name="Tanikawa M."/>
            <person name="Yamazaki M."/>
            <person name="Ninomiya K."/>
            <person name="Ishibashi T."/>
            <person name="Yamashita H."/>
            <person name="Murakawa K."/>
            <person name="Fujimori K."/>
            <person name="Tanai H."/>
            <person name="Kimata M."/>
            <person name="Watanabe M."/>
            <person name="Hiraoka S."/>
            <person name="Chiba Y."/>
            <person name="Ishida S."/>
            <person name="Ono Y."/>
            <person name="Takiguchi S."/>
            <person name="Watanabe S."/>
            <person name="Yosida M."/>
            <person name="Hotuta T."/>
            <person name="Kusano J."/>
            <person name="Kanehori K."/>
            <person name="Takahashi-Fujii A."/>
            <person name="Hara H."/>
            <person name="Tanase T.-O."/>
            <person name="Nomura Y."/>
            <person name="Togiya S."/>
            <person name="Komai F."/>
            <person name="Hara R."/>
            <person name="Takeuchi K."/>
            <person name="Arita M."/>
            <person name="Imose N."/>
            <person name="Musashino K."/>
            <person name="Yuuki H."/>
            <person name="Oshima A."/>
            <person name="Sasaki N."/>
            <person name="Aotsuka S."/>
            <person name="Yoshikawa Y."/>
            <person name="Matsunawa H."/>
            <person name="Ichihara T."/>
            <person name="Shiohata N."/>
            <person name="Sano S."/>
            <person name="Moriya S."/>
            <person name="Momiyama H."/>
            <person name="Satoh N."/>
            <person name="Takami S."/>
            <person name="Terashima Y."/>
            <person name="Suzuki O."/>
            <person name="Nakagawa S."/>
            <person name="Senoh A."/>
            <person name="Mizoguchi H."/>
            <person name="Goto Y."/>
            <person name="Shimizu F."/>
            <person name="Wakebe H."/>
            <person name="Hishigaki H."/>
            <person name="Watanabe T."/>
            <person name="Sugiyama A."/>
            <person name="Takemoto M."/>
            <person name="Kawakami B."/>
            <person name="Yamazaki M."/>
            <person name="Watanabe K."/>
            <person name="Kumagai A."/>
            <person name="Itakura S."/>
            <person name="Fukuzumi Y."/>
            <person name="Fujimori Y."/>
            <person name="Komiyama M."/>
            <person name="Tashiro H."/>
            <person name="Tanigami A."/>
            <person name="Fujiwara T."/>
            <person name="Ono T."/>
            <person name="Yamada K."/>
            <person name="Fujii Y."/>
            <person name="Ozaki K."/>
            <person name="Hirao M."/>
            <person name="Ohmori Y."/>
            <person name="Kawabata A."/>
            <person name="Hikiji T."/>
            <person name="Kobatake N."/>
            <person name="Inagaki H."/>
            <person name="Ikema Y."/>
            <person name="Okamoto S."/>
            <person name="Okitani R."/>
            <person name="Kawakami T."/>
            <person name="Noguchi S."/>
            <person name="Itoh T."/>
            <person name="Shigeta K."/>
            <person name="Senba T."/>
            <person name="Matsumura K."/>
            <person name="Nakajima Y."/>
            <person name="Mizuno T."/>
            <person name="Morinaga M."/>
            <person name="Sasaki M."/>
            <person name="Togashi T."/>
            <person name="Oyama M."/>
            <person name="Hata H."/>
            <person name="Watanabe M."/>
            <person name="Komatsu T."/>
            <person name="Mizushima-Sugano J."/>
            <person name="Satoh T."/>
            <person name="Shirai Y."/>
            <person name="Takahashi Y."/>
            <person name="Nakagawa K."/>
            <person name="Okumura K."/>
            <person name="Nagase T."/>
            <person name="Nomura N."/>
            <person name="Kikuchi H."/>
            <person name="Masuho Y."/>
            <person name="Yamashita R."/>
            <person name="Nakai K."/>
            <person name="Yada T."/>
            <person name="Nakamura Y."/>
            <person name="Ohara O."/>
            <person name="Isogai T."/>
            <person name="Sugano S."/>
        </authorList>
    </citation>
    <scope>NUCLEOTIDE SEQUENCE [LARGE SCALE MRNA] (ISOFORM 5)</scope>
</reference>
<reference key="2">
    <citation type="journal article" date="2005" name="Nature">
        <title>Generation and annotation of the DNA sequences of human chromosomes 2 and 4.</title>
        <authorList>
            <person name="Hillier L.W."/>
            <person name="Graves T.A."/>
            <person name="Fulton R.S."/>
            <person name="Fulton L.A."/>
            <person name="Pepin K.H."/>
            <person name="Minx P."/>
            <person name="Wagner-McPherson C."/>
            <person name="Layman D."/>
            <person name="Wylie K."/>
            <person name="Sekhon M."/>
            <person name="Becker M.C."/>
            <person name="Fewell G.A."/>
            <person name="Delehaunty K.D."/>
            <person name="Miner T.L."/>
            <person name="Nash W.E."/>
            <person name="Kremitzki C."/>
            <person name="Oddy L."/>
            <person name="Du H."/>
            <person name="Sun H."/>
            <person name="Bradshaw-Cordum H."/>
            <person name="Ali J."/>
            <person name="Carter J."/>
            <person name="Cordes M."/>
            <person name="Harris A."/>
            <person name="Isak A."/>
            <person name="van Brunt A."/>
            <person name="Nguyen C."/>
            <person name="Du F."/>
            <person name="Courtney L."/>
            <person name="Kalicki J."/>
            <person name="Ozersky P."/>
            <person name="Abbott S."/>
            <person name="Armstrong J."/>
            <person name="Belter E.A."/>
            <person name="Caruso L."/>
            <person name="Cedroni M."/>
            <person name="Cotton M."/>
            <person name="Davidson T."/>
            <person name="Desai A."/>
            <person name="Elliott G."/>
            <person name="Erb T."/>
            <person name="Fronick C."/>
            <person name="Gaige T."/>
            <person name="Haakenson W."/>
            <person name="Haglund K."/>
            <person name="Holmes A."/>
            <person name="Harkins R."/>
            <person name="Kim K."/>
            <person name="Kruchowski S.S."/>
            <person name="Strong C.M."/>
            <person name="Grewal N."/>
            <person name="Goyea E."/>
            <person name="Hou S."/>
            <person name="Levy A."/>
            <person name="Martinka S."/>
            <person name="Mead K."/>
            <person name="McLellan M.D."/>
            <person name="Meyer R."/>
            <person name="Randall-Maher J."/>
            <person name="Tomlinson C."/>
            <person name="Dauphin-Kohlberg S."/>
            <person name="Kozlowicz-Reilly A."/>
            <person name="Shah N."/>
            <person name="Swearengen-Shahid S."/>
            <person name="Snider J."/>
            <person name="Strong J.T."/>
            <person name="Thompson J."/>
            <person name="Yoakum M."/>
            <person name="Leonard S."/>
            <person name="Pearman C."/>
            <person name="Trani L."/>
            <person name="Radionenko M."/>
            <person name="Waligorski J.E."/>
            <person name="Wang C."/>
            <person name="Rock S.M."/>
            <person name="Tin-Wollam A.-M."/>
            <person name="Maupin R."/>
            <person name="Latreille P."/>
            <person name="Wendl M.C."/>
            <person name="Yang S.-P."/>
            <person name="Pohl C."/>
            <person name="Wallis J.W."/>
            <person name="Spieth J."/>
            <person name="Bieri T.A."/>
            <person name="Berkowicz N."/>
            <person name="Nelson J.O."/>
            <person name="Osborne J."/>
            <person name="Ding L."/>
            <person name="Meyer R."/>
            <person name="Sabo A."/>
            <person name="Shotland Y."/>
            <person name="Sinha P."/>
            <person name="Wohldmann P.E."/>
            <person name="Cook L.L."/>
            <person name="Hickenbotham M.T."/>
            <person name="Eldred J."/>
            <person name="Williams D."/>
            <person name="Jones T.A."/>
            <person name="She X."/>
            <person name="Ciccarelli F.D."/>
            <person name="Izaurralde E."/>
            <person name="Taylor J."/>
            <person name="Schmutz J."/>
            <person name="Myers R.M."/>
            <person name="Cox D.R."/>
            <person name="Huang X."/>
            <person name="McPherson J.D."/>
            <person name="Mardis E.R."/>
            <person name="Clifton S.W."/>
            <person name="Warren W.C."/>
            <person name="Chinwalla A.T."/>
            <person name="Eddy S.R."/>
            <person name="Marra M.A."/>
            <person name="Ovcharenko I."/>
            <person name="Furey T.S."/>
            <person name="Miller W."/>
            <person name="Eichler E.E."/>
            <person name="Bork P."/>
            <person name="Suyama M."/>
            <person name="Torrents D."/>
            <person name="Waterston R.H."/>
            <person name="Wilson R.K."/>
        </authorList>
    </citation>
    <scope>NUCLEOTIDE SEQUENCE [LARGE SCALE GENOMIC DNA]</scope>
</reference>
<reference key="3">
    <citation type="journal article" date="2004" name="Genome Res.">
        <title>The status, quality, and expansion of the NIH full-length cDNA project: the Mammalian Gene Collection (MGC).</title>
        <authorList>
            <consortium name="The MGC Project Team"/>
        </authorList>
    </citation>
    <scope>NUCLEOTIDE SEQUENCE [LARGE SCALE MRNA] (ISOFORMS 1; 2; 3 AND 4)</scope>
    <source>
        <tissue>Brain</tissue>
        <tissue>Testis</tissue>
    </source>
</reference>
<reference key="4">
    <citation type="journal article" date="2008" name="Science">
        <title>Sequence variants in the RNF212 gene associate with genome-wide recombination rate.</title>
        <authorList>
            <person name="Kong A."/>
            <person name="Thorleifsson G."/>
            <person name="Stefansson H."/>
            <person name="Masson G."/>
            <person name="Helgason A."/>
            <person name="Gudbjartsson D.F."/>
            <person name="Jonsdottir G.M."/>
            <person name="Gudjonsson S.A."/>
            <person name="Sverrisson S."/>
            <person name="Thorlacius T."/>
            <person name="Jonasdottir A."/>
            <person name="Hardarson G.A."/>
            <person name="Palsson S.T."/>
            <person name="Frigge M.L."/>
            <person name="Gulcher J.R."/>
            <person name="Thorsteinsdottir U."/>
            <person name="Stefansson K."/>
        </authorList>
    </citation>
    <scope>ASSOCIATION WITH RRQTL1</scope>
</reference>
<reference key="5">
    <citation type="journal article" date="2019" name="Hum. Reprod.">
        <title>Sequencing of a 'mouse azoospermia' gene panel in azoospermic men: identification of RNF212 and STAG3 mutations as novel genetic causes of meiotic arrest.</title>
        <authorList>
            <person name="Riera-Escamilla A."/>
            <person name="Enguita-Marruedo A."/>
            <person name="Moreno-Mendoza D."/>
            <person name="Chianese C."/>
            <person name="Sleddens-Linkels E."/>
            <person name="Contini E."/>
            <person name="Benelli M."/>
            <person name="Natali A."/>
            <person name="Colpi G.M."/>
            <person name="Ruiz-Castane E."/>
            <person name="Maggi M."/>
            <person name="Baarends W.M."/>
            <person name="Krausz C."/>
        </authorList>
    </citation>
    <scope>INVOLVEMENT IN SPGF62</scope>
</reference>
<organism>
    <name type="scientific">Homo sapiens</name>
    <name type="common">Human</name>
    <dbReference type="NCBI Taxonomy" id="9606"/>
    <lineage>
        <taxon>Eukaryota</taxon>
        <taxon>Metazoa</taxon>
        <taxon>Chordata</taxon>
        <taxon>Craniata</taxon>
        <taxon>Vertebrata</taxon>
        <taxon>Euteleostomi</taxon>
        <taxon>Mammalia</taxon>
        <taxon>Eutheria</taxon>
        <taxon>Euarchontoglires</taxon>
        <taxon>Primates</taxon>
        <taxon>Haplorrhini</taxon>
        <taxon>Catarrhini</taxon>
        <taxon>Hominidae</taxon>
        <taxon>Homo</taxon>
    </lineage>
</organism>
<feature type="chain" id="PRO_0000274612" description="Probable E3 SUMO-protein ligase RNF212">
    <location>
        <begin position="1"/>
        <end position="297"/>
    </location>
</feature>
<feature type="zinc finger region" description="RING-type" evidence="3">
    <location>
        <begin position="7"/>
        <end position="46"/>
    </location>
</feature>
<feature type="coiled-coil region" evidence="2">
    <location>
        <begin position="91"/>
        <end position="124"/>
    </location>
</feature>
<feature type="splice variant" id="VSP_022839" description="In isoform 4." evidence="7">
    <original>ILEFQEKHRKRLLAFYREKISRLEESLRKSVLQIEQLQSMRSSQQTAFSTIKSSVSTKPHGCLLPPHSSAPDRLESMEVDLSPSPIRKSEIAAGPARISMISPPQDGRMGPHLTASFCFIPWLTLSKPPVPGECVISRGSPCFCIDVCPHWLLLLAFSSGRHGELTNSKTLPIYAEVQRAVLFPFQQAEGTLDTFRTPAVSVVFPLCQFERKKSF</original>
    <variation>YLRLSRGCCRLKLCPATSSKEVPRGSTHGSQAAARDPQEHWVSTTRAPRPGCRRSQSQPEAQGNTIQDAPHPLTLLHPSRTLIHTKSPWGQKLLEFIKHVCYHRHQSHRPCAPGWFCQVLQRPGAVSGEKTQQTRPAPPATCLLCLSCLSGFRHGPWRWLAPAWAAQALPSDLVAPLFVSYTVEVSITNAGWSFPAAV</variation>
    <location>
        <begin position="83"/>
        <end position="297"/>
    </location>
</feature>
<feature type="splice variant" id="VSP_046301" description="In isoform 6." evidence="8">
    <original>ILEFQEKHRKRLLAFYREKISRLEESLRKSVLQIEQLQSMRSSQQTAFSTIKSSVSTKPHGCLLPPHSSAPDRLESMEVDLSPSPIRKSEIAAGPARISMISPPQDGRMGPHLTASFCFIPWLTLSKPPVPGECVISRGSPCFCIDVCPHWLLLLAFSSGRHGELTNSKTLPIYAEVQRAVLFPFQQAEGTLDTFRTPAVSVVFPLCQFERKKSF</original>
    <variation>YLRLSRGCCRLKLCPATSSKEVPRGSTHGSQAAARDPQEHWVSTTRAPRPGCRRSQSQPEAQGNTIQDAPHPLTLLHPSRTLIHTKSPWGQKLLEFIKHVCYHRHQSHRPCAPGWFCQVLQRPGAVSGEKTQQTRPAPPATCLLCLSCLSGFRHGPWRSQALPSDLVAPLFVSYTVEVSITNAGWSFPAAV</variation>
    <location>
        <begin position="83"/>
        <end position="297"/>
    </location>
</feature>
<feature type="splice variant" id="VSP_022840" description="In isoform 2." evidence="7">
    <original>M</original>
    <variation>L</variation>
    <location>
        <position position="122"/>
    </location>
</feature>
<feature type="splice variant" id="VSP_022841" description="In isoform 2." evidence="7">
    <location>
        <begin position="124"/>
        <end position="297"/>
    </location>
</feature>
<feature type="splice variant" id="VSP_022842" description="In isoform 5." evidence="6">
    <original>GPHLTASFCFIPWLTLSKPPVPGECVISRGSPCFCIDVCPHWLLLLAFSSGRHGELTNSKTLPIYAEVQRAVLFPFQQAEGTLDT</original>
    <variation>APCARRVCHFQRFTMFLHRRLSSLAAPPSVQFWKARGTHQL</variation>
    <location>
        <begin position="192"/>
        <end position="276"/>
    </location>
</feature>
<feature type="splice variant" id="VSP_022843" description="In isoform 3." evidence="7">
    <location>
        <begin position="193"/>
        <end position="297"/>
    </location>
</feature>
<feature type="splice variant" id="VSP_022844" description="In isoform 5." evidence="6">
    <location>
        <begin position="277"/>
        <end position="297"/>
    </location>
</feature>
<feature type="sequence variant" id="VAR_059815" description="In dbSNP:rs17728127.">
    <original>V</original>
    <variation>I</variation>
    <location>
        <position position="263"/>
    </location>
</feature>
<feature type="sequence conflict" description="In Ref. 3; AAH50356." evidence="8" ref="3">
    <original>P</original>
    <variation>Q</variation>
    <location>
        <position position="147"/>
    </location>
</feature>
<feature type="sequence conflict" description="In Ref. 3; AAH36250." evidence="8" ref="3">
    <original>Q</original>
    <variation>H</variation>
    <location sequence="Q495C1-4">
        <position position="144"/>
    </location>
</feature>
<feature type="sequence conflict" description="In Ref. 3; AAH36250." evidence="8" ref="3">
    <original>Q</original>
    <variation>R</variation>
    <location sequence="Q495C1-4">
        <position position="173"/>
    </location>
</feature>
<feature type="sequence conflict" description="In Ref. 3; AAH36250." evidence="8" ref="3">
    <original>A</original>
    <variation>D</variation>
    <location sequence="Q495C1-4">
        <position position="219"/>
    </location>
</feature>
<feature type="sequence conflict" description="In Ref. 3; AAH36250." evidence="8" ref="3">
    <original>I</original>
    <variation>V</variation>
    <location sequence="Q495C1-4">
        <position position="269"/>
    </location>
</feature>
<protein>
    <recommendedName>
        <fullName>Probable E3 SUMO-protein ligase RNF212</fullName>
        <ecNumber>2.3.2.-</ecNumber>
    </recommendedName>
    <alternativeName>
        <fullName evidence="8">Probable E3 SUMO-protein transferase RNF212</fullName>
    </alternativeName>
    <alternativeName>
        <fullName>RING finger protein 212</fullName>
    </alternativeName>
</protein>
<evidence type="ECO:0000250" key="1"/>
<evidence type="ECO:0000255" key="2"/>
<evidence type="ECO:0000255" key="3">
    <source>
        <dbReference type="PROSITE-ProRule" id="PRU00175"/>
    </source>
</evidence>
<evidence type="ECO:0000269" key="4">
    <source>
    </source>
</evidence>
<evidence type="ECO:0000269" key="5">
    <source>
    </source>
</evidence>
<evidence type="ECO:0000303" key="6">
    <source>
    </source>
</evidence>
<evidence type="ECO:0000303" key="7">
    <source>
    </source>
</evidence>
<evidence type="ECO:0000305" key="8"/>